<protein>
    <recommendedName>
        <fullName evidence="1">ATP synthase subunit alpha</fullName>
        <ecNumber evidence="1">7.1.2.2</ecNumber>
    </recommendedName>
    <alternativeName>
        <fullName evidence="1">ATP synthase F1 sector subunit alpha</fullName>
    </alternativeName>
    <alternativeName>
        <fullName evidence="1">F-ATPase subunit alpha</fullName>
    </alternativeName>
</protein>
<keyword id="KW-0066">ATP synthesis</keyword>
<keyword id="KW-0067">ATP-binding</keyword>
<keyword id="KW-1003">Cell membrane</keyword>
<keyword id="KW-0139">CF(1)</keyword>
<keyword id="KW-0375">Hydrogen ion transport</keyword>
<keyword id="KW-0406">Ion transport</keyword>
<keyword id="KW-0472">Membrane</keyword>
<keyword id="KW-0547">Nucleotide-binding</keyword>
<keyword id="KW-1185">Reference proteome</keyword>
<keyword id="KW-1278">Translocase</keyword>
<keyword id="KW-0813">Transport</keyword>
<sequence>MSIKSEEISALIKQQLESYQTELSVAETGTVTYVGDGIARAHGLDNALQGELLEFSNGVYGMVQNLESNDVGIVVLGDFDGIREGDTVKRTGRIMEVPVGDAMIGRVVNPLGQPVDGLGEIKTTNTRPIEHKAPGIMQRQSVSEPLQTGIKAIDALVPIGRGQRELIIGDRKTGKTSVAIDAILNQKDQDMICVYVAIGQKDSTVRAQVETLKKLGAMDYTIVVTAGPAEPAPLLYLAPYAGAAMGEEFMMNGKHVLIVYDDLSKQATAYRELSLILRRPPGREAYPGDVFYLHSRLLERAAKLSDELGGGSMTALPIIETQAGDISAYIPTNVISITDGQIFLDSDSFYSGVRPAIDAGASVSRVGGDAQIKAMKSVAGTLRLDLASYRELESFSQFGSDLDAATQAKLNRGQRIVEVLKQPVHSPLKVEEQVMILYALTNGYLDKVAVDDIARYQSELFEFIHASHQDLFDTILATKKLPEADKMNGALDAFAEQFQPTAAK</sequence>
<reference key="1">
    <citation type="journal article" date="2003" name="Proc. Natl. Acad. Sci. U.S.A.">
        <title>Complete genome sequence of Lactobacillus plantarum WCFS1.</title>
        <authorList>
            <person name="Kleerebezem M."/>
            <person name="Boekhorst J."/>
            <person name="van Kranenburg R."/>
            <person name="Molenaar D."/>
            <person name="Kuipers O.P."/>
            <person name="Leer R."/>
            <person name="Tarchini R."/>
            <person name="Peters S.A."/>
            <person name="Sandbrink H.M."/>
            <person name="Fiers M.W.E.J."/>
            <person name="Stiekema W."/>
            <person name="Klein Lankhorst R.M."/>
            <person name="Bron P.A."/>
            <person name="Hoffer S.M."/>
            <person name="Nierop Groot M.N."/>
            <person name="Kerkhoven R."/>
            <person name="De Vries M."/>
            <person name="Ursing B."/>
            <person name="De Vos W.M."/>
            <person name="Siezen R.J."/>
        </authorList>
    </citation>
    <scope>NUCLEOTIDE SEQUENCE [LARGE SCALE GENOMIC DNA]</scope>
    <source>
        <strain>ATCC BAA-793 / NCIMB 8826 / WCFS1</strain>
    </source>
</reference>
<reference key="2">
    <citation type="journal article" date="2012" name="J. Bacteriol.">
        <title>Complete resequencing and reannotation of the Lactobacillus plantarum WCFS1 genome.</title>
        <authorList>
            <person name="Siezen R.J."/>
            <person name="Francke C."/>
            <person name="Renckens B."/>
            <person name="Boekhorst J."/>
            <person name="Wels M."/>
            <person name="Kleerebezem M."/>
            <person name="van Hijum S.A."/>
        </authorList>
    </citation>
    <scope>NUCLEOTIDE SEQUENCE [LARGE SCALE GENOMIC DNA]</scope>
    <scope>GENOME REANNOTATION</scope>
    <source>
        <strain>ATCC BAA-793 / NCIMB 8826 / WCFS1</strain>
    </source>
</reference>
<gene>
    <name evidence="1" type="primary">atpA</name>
    <name type="ordered locus">lp_2366</name>
</gene>
<accession>Q88UU1</accession>
<accession>F9UQR5</accession>
<feature type="chain" id="PRO_0000238267" description="ATP synthase subunit alpha">
    <location>
        <begin position="1"/>
        <end position="504"/>
    </location>
</feature>
<feature type="binding site" evidence="1">
    <location>
        <begin position="169"/>
        <end position="176"/>
    </location>
    <ligand>
        <name>ATP</name>
        <dbReference type="ChEBI" id="CHEBI:30616"/>
    </ligand>
</feature>
<feature type="site" description="Required for activity" evidence="1">
    <location>
        <position position="362"/>
    </location>
</feature>
<organism>
    <name type="scientific">Lactiplantibacillus plantarum (strain ATCC BAA-793 / NCIMB 8826 / WCFS1)</name>
    <name type="common">Lactobacillus plantarum</name>
    <dbReference type="NCBI Taxonomy" id="220668"/>
    <lineage>
        <taxon>Bacteria</taxon>
        <taxon>Bacillati</taxon>
        <taxon>Bacillota</taxon>
        <taxon>Bacilli</taxon>
        <taxon>Lactobacillales</taxon>
        <taxon>Lactobacillaceae</taxon>
        <taxon>Lactiplantibacillus</taxon>
    </lineage>
</organism>
<comment type="function">
    <text evidence="1">Produces ATP from ADP in the presence of a proton gradient across the membrane. The alpha chain is a regulatory subunit.</text>
</comment>
<comment type="catalytic activity">
    <reaction evidence="1">
        <text>ATP + H2O + 4 H(+)(in) = ADP + phosphate + 5 H(+)(out)</text>
        <dbReference type="Rhea" id="RHEA:57720"/>
        <dbReference type="ChEBI" id="CHEBI:15377"/>
        <dbReference type="ChEBI" id="CHEBI:15378"/>
        <dbReference type="ChEBI" id="CHEBI:30616"/>
        <dbReference type="ChEBI" id="CHEBI:43474"/>
        <dbReference type="ChEBI" id="CHEBI:456216"/>
        <dbReference type="EC" id="7.1.2.2"/>
    </reaction>
</comment>
<comment type="subunit">
    <text evidence="1">F-type ATPases have 2 components, CF(1) - the catalytic core - and CF(0) - the membrane proton channel. CF(1) has five subunits: alpha(3), beta(3), gamma(1), delta(1), epsilon(1). CF(0) has three main subunits: a(1), b(2) and c(9-12). The alpha and beta chains form an alternating ring which encloses part of the gamma chain. CF(1) is attached to CF(0) by a central stalk formed by the gamma and epsilon chains, while a peripheral stalk is formed by the delta and b chains.</text>
</comment>
<comment type="subcellular location">
    <subcellularLocation>
        <location evidence="1">Cell membrane</location>
        <topology evidence="1">Peripheral membrane protein</topology>
    </subcellularLocation>
</comment>
<comment type="similarity">
    <text evidence="1">Belongs to the ATPase alpha/beta chains family.</text>
</comment>
<dbReference type="EC" id="7.1.2.2" evidence="1"/>
<dbReference type="EMBL" id="AL935263">
    <property type="protein sequence ID" value="CCC79554.1"/>
    <property type="molecule type" value="Genomic_DNA"/>
</dbReference>
<dbReference type="RefSeq" id="WP_011101724.1">
    <property type="nucleotide sequence ID" value="NC_004567.2"/>
</dbReference>
<dbReference type="RefSeq" id="YP_004890068.1">
    <property type="nucleotide sequence ID" value="NC_004567.2"/>
</dbReference>
<dbReference type="SMR" id="Q88UU1"/>
<dbReference type="STRING" id="220668.lp_2366"/>
<dbReference type="EnsemblBacteria" id="CCC79554">
    <property type="protein sequence ID" value="CCC79554"/>
    <property type="gene ID" value="lp_2366"/>
</dbReference>
<dbReference type="KEGG" id="lpl:lp_2366"/>
<dbReference type="PATRIC" id="fig|220668.9.peg.1999"/>
<dbReference type="eggNOG" id="COG0056">
    <property type="taxonomic scope" value="Bacteria"/>
</dbReference>
<dbReference type="HOGENOM" id="CLU_010091_2_1_9"/>
<dbReference type="OrthoDB" id="9803053at2"/>
<dbReference type="PhylomeDB" id="Q88UU1"/>
<dbReference type="Proteomes" id="UP000000432">
    <property type="component" value="Chromosome"/>
</dbReference>
<dbReference type="GO" id="GO:0005886">
    <property type="term" value="C:plasma membrane"/>
    <property type="evidence" value="ECO:0007669"/>
    <property type="project" value="UniProtKB-SubCell"/>
</dbReference>
<dbReference type="GO" id="GO:0045259">
    <property type="term" value="C:proton-transporting ATP synthase complex"/>
    <property type="evidence" value="ECO:0007669"/>
    <property type="project" value="UniProtKB-KW"/>
</dbReference>
<dbReference type="GO" id="GO:0043531">
    <property type="term" value="F:ADP binding"/>
    <property type="evidence" value="ECO:0007669"/>
    <property type="project" value="TreeGrafter"/>
</dbReference>
<dbReference type="GO" id="GO:0005524">
    <property type="term" value="F:ATP binding"/>
    <property type="evidence" value="ECO:0007669"/>
    <property type="project" value="UniProtKB-UniRule"/>
</dbReference>
<dbReference type="GO" id="GO:0046933">
    <property type="term" value="F:proton-transporting ATP synthase activity, rotational mechanism"/>
    <property type="evidence" value="ECO:0007669"/>
    <property type="project" value="UniProtKB-UniRule"/>
</dbReference>
<dbReference type="CDD" id="cd18113">
    <property type="entry name" value="ATP-synt_F1_alpha_C"/>
    <property type="match status" value="1"/>
</dbReference>
<dbReference type="CDD" id="cd18116">
    <property type="entry name" value="ATP-synt_F1_alpha_N"/>
    <property type="match status" value="1"/>
</dbReference>
<dbReference type="CDD" id="cd01132">
    <property type="entry name" value="F1-ATPase_alpha_CD"/>
    <property type="match status" value="1"/>
</dbReference>
<dbReference type="FunFam" id="1.20.150.20:FF:000001">
    <property type="entry name" value="ATP synthase subunit alpha"/>
    <property type="match status" value="1"/>
</dbReference>
<dbReference type="FunFam" id="2.40.30.20:FF:000001">
    <property type="entry name" value="ATP synthase subunit alpha"/>
    <property type="match status" value="1"/>
</dbReference>
<dbReference type="FunFam" id="3.40.50.300:FF:000002">
    <property type="entry name" value="ATP synthase subunit alpha"/>
    <property type="match status" value="1"/>
</dbReference>
<dbReference type="Gene3D" id="2.40.30.20">
    <property type="match status" value="1"/>
</dbReference>
<dbReference type="Gene3D" id="1.20.150.20">
    <property type="entry name" value="ATP synthase alpha/beta chain, C-terminal domain"/>
    <property type="match status" value="1"/>
</dbReference>
<dbReference type="Gene3D" id="3.40.50.300">
    <property type="entry name" value="P-loop containing nucleotide triphosphate hydrolases"/>
    <property type="match status" value="1"/>
</dbReference>
<dbReference type="HAMAP" id="MF_01346">
    <property type="entry name" value="ATP_synth_alpha_bact"/>
    <property type="match status" value="1"/>
</dbReference>
<dbReference type="InterPro" id="IPR023366">
    <property type="entry name" value="ATP_synth_asu-like_sf"/>
</dbReference>
<dbReference type="InterPro" id="IPR000793">
    <property type="entry name" value="ATP_synth_asu_C"/>
</dbReference>
<dbReference type="InterPro" id="IPR038376">
    <property type="entry name" value="ATP_synth_asu_C_sf"/>
</dbReference>
<dbReference type="InterPro" id="IPR033732">
    <property type="entry name" value="ATP_synth_F1_a_nt-bd_dom"/>
</dbReference>
<dbReference type="InterPro" id="IPR005294">
    <property type="entry name" value="ATP_synth_F1_asu"/>
</dbReference>
<dbReference type="InterPro" id="IPR020003">
    <property type="entry name" value="ATPase_a/bsu_AS"/>
</dbReference>
<dbReference type="InterPro" id="IPR004100">
    <property type="entry name" value="ATPase_F1/V1/A1_a/bsu_N"/>
</dbReference>
<dbReference type="InterPro" id="IPR036121">
    <property type="entry name" value="ATPase_F1/V1/A1_a/bsu_N_sf"/>
</dbReference>
<dbReference type="InterPro" id="IPR000194">
    <property type="entry name" value="ATPase_F1/V1/A1_a/bsu_nucl-bd"/>
</dbReference>
<dbReference type="InterPro" id="IPR027417">
    <property type="entry name" value="P-loop_NTPase"/>
</dbReference>
<dbReference type="NCBIfam" id="TIGR00962">
    <property type="entry name" value="atpA"/>
    <property type="match status" value="1"/>
</dbReference>
<dbReference type="NCBIfam" id="NF009884">
    <property type="entry name" value="PRK13343.1"/>
    <property type="match status" value="1"/>
</dbReference>
<dbReference type="PANTHER" id="PTHR48082">
    <property type="entry name" value="ATP SYNTHASE SUBUNIT ALPHA, MITOCHONDRIAL"/>
    <property type="match status" value="1"/>
</dbReference>
<dbReference type="PANTHER" id="PTHR48082:SF2">
    <property type="entry name" value="ATP SYNTHASE SUBUNIT ALPHA, MITOCHONDRIAL"/>
    <property type="match status" value="1"/>
</dbReference>
<dbReference type="Pfam" id="PF00006">
    <property type="entry name" value="ATP-synt_ab"/>
    <property type="match status" value="1"/>
</dbReference>
<dbReference type="Pfam" id="PF00306">
    <property type="entry name" value="ATP-synt_ab_C"/>
    <property type="match status" value="1"/>
</dbReference>
<dbReference type="Pfam" id="PF02874">
    <property type="entry name" value="ATP-synt_ab_N"/>
    <property type="match status" value="1"/>
</dbReference>
<dbReference type="PIRSF" id="PIRSF039088">
    <property type="entry name" value="F_ATPase_subunit_alpha"/>
    <property type="match status" value="1"/>
</dbReference>
<dbReference type="SUPFAM" id="SSF47917">
    <property type="entry name" value="C-terminal domain of alpha and beta subunits of F1 ATP synthase"/>
    <property type="match status" value="1"/>
</dbReference>
<dbReference type="SUPFAM" id="SSF50615">
    <property type="entry name" value="N-terminal domain of alpha and beta subunits of F1 ATP synthase"/>
    <property type="match status" value="1"/>
</dbReference>
<dbReference type="SUPFAM" id="SSF52540">
    <property type="entry name" value="P-loop containing nucleoside triphosphate hydrolases"/>
    <property type="match status" value="1"/>
</dbReference>
<dbReference type="PROSITE" id="PS00152">
    <property type="entry name" value="ATPASE_ALPHA_BETA"/>
    <property type="match status" value="1"/>
</dbReference>
<name>ATPA_LACPL</name>
<evidence type="ECO:0000255" key="1">
    <source>
        <dbReference type="HAMAP-Rule" id="MF_01346"/>
    </source>
</evidence>
<proteinExistence type="inferred from homology"/>